<dbReference type="EMBL" id="Z54075">
    <property type="protein sequence ID" value="CAA90780.1"/>
    <property type="molecule type" value="Genomic_DNA"/>
</dbReference>
<dbReference type="EMBL" id="AY557648">
    <property type="protein sequence ID" value="AAS55974.1"/>
    <property type="molecule type" value="Genomic_DNA"/>
</dbReference>
<dbReference type="EMBL" id="BK006938">
    <property type="protein sequence ID" value="DAA11889.1"/>
    <property type="molecule type" value="Genomic_DNA"/>
</dbReference>
<dbReference type="PIR" id="S59279">
    <property type="entry name" value="S59279"/>
</dbReference>
<dbReference type="RefSeq" id="NP_010326.1">
    <property type="nucleotide sequence ID" value="NM_001180349.1"/>
</dbReference>
<dbReference type="PDB" id="5MRC">
    <property type="method" value="EM"/>
    <property type="resolution" value="3.25 A"/>
    <property type="chains" value="JJ=16-201"/>
</dbReference>
<dbReference type="PDB" id="5MRE">
    <property type="method" value="EM"/>
    <property type="resolution" value="3.75 A"/>
    <property type="chains" value="JJ=16-201"/>
</dbReference>
<dbReference type="PDB" id="5MRF">
    <property type="method" value="EM"/>
    <property type="resolution" value="4.97 A"/>
    <property type="chains" value="JJ=16-201"/>
</dbReference>
<dbReference type="PDB" id="8D8K">
    <property type="method" value="EM"/>
    <property type="resolution" value="3.13 A"/>
    <property type="chains" value="J=1-203"/>
</dbReference>
<dbReference type="PDB" id="8D8L">
    <property type="method" value="EM"/>
    <property type="resolution" value="2.60 A"/>
    <property type="chains" value="J=1-203"/>
</dbReference>
<dbReference type="PDB" id="8OM2">
    <property type="method" value="EM"/>
    <property type="resolution" value="2.57 A"/>
    <property type="chains" value="J=1-203"/>
</dbReference>
<dbReference type="PDB" id="8OM3">
    <property type="method" value="EM"/>
    <property type="resolution" value="2.87 A"/>
    <property type="chains" value="J=1-203"/>
</dbReference>
<dbReference type="PDB" id="8OM4">
    <property type="method" value="EM"/>
    <property type="resolution" value="2.32 A"/>
    <property type="chains" value="J=1-203"/>
</dbReference>
<dbReference type="PDBsum" id="5MRC"/>
<dbReference type="PDBsum" id="5MRE"/>
<dbReference type="PDBsum" id="5MRF"/>
<dbReference type="PDBsum" id="8D8K"/>
<dbReference type="PDBsum" id="8D8L"/>
<dbReference type="PDBsum" id="8OM2"/>
<dbReference type="PDBsum" id="8OM3"/>
<dbReference type="PDBsum" id="8OM4"/>
<dbReference type="EMDB" id="EMD-16966"/>
<dbReference type="EMDB" id="EMD-16967"/>
<dbReference type="EMDB" id="EMD-16968"/>
<dbReference type="EMDB" id="EMD-27250"/>
<dbReference type="EMDB" id="EMD-27251"/>
<dbReference type="EMDB" id="EMD-3551"/>
<dbReference type="EMDB" id="EMD-3552"/>
<dbReference type="EMDB" id="EMD-3553"/>
<dbReference type="SMR" id="Q03201"/>
<dbReference type="BioGRID" id="32096">
    <property type="interactions" value="81"/>
</dbReference>
<dbReference type="ComplexPortal" id="CPX-1603">
    <property type="entry name" value="37S mitochondrial small ribosomal subunit"/>
</dbReference>
<dbReference type="DIP" id="DIP-6669N"/>
<dbReference type="FunCoup" id="Q03201">
    <property type="interactions" value="413"/>
</dbReference>
<dbReference type="IntAct" id="Q03201">
    <property type="interactions" value="58"/>
</dbReference>
<dbReference type="MINT" id="Q03201"/>
<dbReference type="STRING" id="4932.YDR041W"/>
<dbReference type="iPTMnet" id="Q03201"/>
<dbReference type="PaxDb" id="4932-YDR041W"/>
<dbReference type="PeptideAtlas" id="Q03201"/>
<dbReference type="EnsemblFungi" id="YDR041W_mRNA">
    <property type="protein sequence ID" value="YDR041W"/>
    <property type="gene ID" value="YDR041W"/>
</dbReference>
<dbReference type="GeneID" id="851611"/>
<dbReference type="KEGG" id="sce:YDR041W"/>
<dbReference type="AGR" id="SGD:S000002448"/>
<dbReference type="SGD" id="S000002448">
    <property type="gene designation" value="RSM10"/>
</dbReference>
<dbReference type="VEuPathDB" id="FungiDB:YDR041W"/>
<dbReference type="eggNOG" id="KOG3321">
    <property type="taxonomic scope" value="Eukaryota"/>
</dbReference>
<dbReference type="HOGENOM" id="CLU_051208_4_0_1"/>
<dbReference type="InParanoid" id="Q03201"/>
<dbReference type="OMA" id="LRKHQFY"/>
<dbReference type="OrthoDB" id="366214at2759"/>
<dbReference type="BioCyc" id="YEAST:G3O-29655-MONOMER"/>
<dbReference type="BioGRID-ORCS" id="851611">
    <property type="hits" value="2 hits in 10 CRISPR screens"/>
</dbReference>
<dbReference type="PRO" id="PR:Q03201"/>
<dbReference type="Proteomes" id="UP000002311">
    <property type="component" value="Chromosome IV"/>
</dbReference>
<dbReference type="RNAct" id="Q03201">
    <property type="molecule type" value="protein"/>
</dbReference>
<dbReference type="GO" id="GO:0005743">
    <property type="term" value="C:mitochondrial inner membrane"/>
    <property type="evidence" value="ECO:0000303"/>
    <property type="project" value="ComplexPortal"/>
</dbReference>
<dbReference type="GO" id="GO:0005763">
    <property type="term" value="C:mitochondrial small ribosomal subunit"/>
    <property type="evidence" value="ECO:0000314"/>
    <property type="project" value="SGD"/>
</dbReference>
<dbReference type="GO" id="GO:0005739">
    <property type="term" value="C:mitochondrion"/>
    <property type="evidence" value="ECO:0007005"/>
    <property type="project" value="SGD"/>
</dbReference>
<dbReference type="GO" id="GO:0015935">
    <property type="term" value="C:small ribosomal subunit"/>
    <property type="evidence" value="ECO:0000318"/>
    <property type="project" value="GO_Central"/>
</dbReference>
<dbReference type="GO" id="GO:0003735">
    <property type="term" value="F:structural constituent of ribosome"/>
    <property type="evidence" value="ECO:0000314"/>
    <property type="project" value="SGD"/>
</dbReference>
<dbReference type="GO" id="GO:0032543">
    <property type="term" value="P:mitochondrial translation"/>
    <property type="evidence" value="ECO:0000303"/>
    <property type="project" value="ComplexPortal"/>
</dbReference>
<dbReference type="FunFam" id="3.30.70.600:FF:000003">
    <property type="entry name" value="30S ribosomal protein S10"/>
    <property type="match status" value="1"/>
</dbReference>
<dbReference type="Gene3D" id="3.30.70.600">
    <property type="entry name" value="Ribosomal protein S10 domain"/>
    <property type="match status" value="1"/>
</dbReference>
<dbReference type="HAMAP" id="MF_00508">
    <property type="entry name" value="Ribosomal_uS10"/>
    <property type="match status" value="1"/>
</dbReference>
<dbReference type="InterPro" id="IPR001848">
    <property type="entry name" value="Ribosomal_uS10"/>
</dbReference>
<dbReference type="InterPro" id="IPR027486">
    <property type="entry name" value="Ribosomal_uS10_dom"/>
</dbReference>
<dbReference type="InterPro" id="IPR036838">
    <property type="entry name" value="Ribosomal_uS10_dom_sf"/>
</dbReference>
<dbReference type="NCBIfam" id="TIGR01049">
    <property type="entry name" value="rpsJ_bact"/>
    <property type="match status" value="1"/>
</dbReference>
<dbReference type="PANTHER" id="PTHR11700">
    <property type="entry name" value="30S RIBOSOMAL PROTEIN S10 FAMILY MEMBER"/>
    <property type="match status" value="1"/>
</dbReference>
<dbReference type="Pfam" id="PF00338">
    <property type="entry name" value="Ribosomal_S10"/>
    <property type="match status" value="1"/>
</dbReference>
<dbReference type="PRINTS" id="PR00971">
    <property type="entry name" value="RIBOSOMALS10"/>
</dbReference>
<dbReference type="SMART" id="SM01403">
    <property type="entry name" value="Ribosomal_S10"/>
    <property type="match status" value="1"/>
</dbReference>
<dbReference type="SUPFAM" id="SSF54999">
    <property type="entry name" value="Ribosomal protein S10"/>
    <property type="match status" value="1"/>
</dbReference>
<evidence type="ECO:0000255" key="1"/>
<evidence type="ECO:0000269" key="2">
    <source>
    </source>
</evidence>
<evidence type="ECO:0000269" key="3">
    <source>
    </source>
</evidence>
<evidence type="ECO:0000269" key="4">
    <source>
    </source>
</evidence>
<evidence type="ECO:0000269" key="5">
    <source>
    </source>
</evidence>
<evidence type="ECO:0000269" key="6">
    <source>
    </source>
</evidence>
<evidence type="ECO:0000269" key="7">
    <source>
    </source>
</evidence>
<evidence type="ECO:0000269" key="8">
    <source>
    </source>
</evidence>
<evidence type="ECO:0000303" key="9">
    <source>
    </source>
</evidence>
<evidence type="ECO:0000305" key="10"/>
<evidence type="ECO:0000305" key="11">
    <source>
    </source>
</evidence>
<evidence type="ECO:0000305" key="12">
    <source>
    </source>
</evidence>
<evidence type="ECO:0007744" key="13">
    <source>
    </source>
</evidence>
<evidence type="ECO:0007829" key="14">
    <source>
        <dbReference type="PDB" id="8D8L"/>
    </source>
</evidence>
<organism>
    <name type="scientific">Saccharomyces cerevisiae (strain ATCC 204508 / S288c)</name>
    <name type="common">Baker's yeast</name>
    <dbReference type="NCBI Taxonomy" id="559292"/>
    <lineage>
        <taxon>Eukaryota</taxon>
        <taxon>Fungi</taxon>
        <taxon>Dikarya</taxon>
        <taxon>Ascomycota</taxon>
        <taxon>Saccharomycotina</taxon>
        <taxon>Saccharomycetes</taxon>
        <taxon>Saccharomycetales</taxon>
        <taxon>Saccharomycetaceae</taxon>
        <taxon>Saccharomyces</taxon>
    </lineage>
</organism>
<comment type="function">
    <text evidence="11 12">Component of the mitochondrial ribosome (mitoribosome), a dedicated translation machinery responsible for the synthesis of mitochondrial genome-encoded proteins, including at least some of the essential transmembrane subunits of the mitochondrial respiratory chain. The mitoribosomes are attached to the mitochondrial inner membrane and translation products are cotranslationally integrated into the membrane.</text>
</comment>
<comment type="subunit">
    <text evidence="2 3 8">Component of the mitochondrial small ribosomal subunit (mt-SSU). Mature yeast 74S mitochondrial ribosomes consist of a small (37S) and a large (54S) subunit. The 37S small subunit contains a 15S ribosomal RNA (15S mt-rRNA) and 34 different proteins. The 54S large subunit contains a 21S rRNA (21S mt-rRNA) and 46 different proteins.</text>
</comment>
<comment type="subcellular location">
    <subcellularLocation>
        <location evidence="2 4 6">Mitochondrion</location>
    </subcellularLocation>
    <text evidence="7">Mitoribosomes are tethered to the mitochondrial inner membrane and spatially aligned with the membrane insertion machinery through two distinct membrane contact sites, formed by the 21S rRNA expansion segment 96-ES1 and the inner membrane protein MBA1.</text>
</comment>
<comment type="miscellaneous">
    <text evidence="5">Present with 8480 molecules/cell in log phase SD medium.</text>
</comment>
<comment type="similarity">
    <text evidence="10">Belongs to the universal ribosomal protein uS10 family.</text>
</comment>
<keyword id="KW-0002">3D-structure</keyword>
<keyword id="KW-0496">Mitochondrion</keyword>
<keyword id="KW-0597">Phosphoprotein</keyword>
<keyword id="KW-1185">Reference proteome</keyword>
<keyword id="KW-0687">Ribonucleoprotein</keyword>
<keyword id="KW-0689">Ribosomal protein</keyword>
<keyword id="KW-0809">Transit peptide</keyword>
<proteinExistence type="evidence at protein level"/>
<reference key="1">
    <citation type="journal article" date="1997" name="Nature">
        <title>The nucleotide sequence of Saccharomyces cerevisiae chromosome IV.</title>
        <authorList>
            <person name="Jacq C."/>
            <person name="Alt-Moerbe J."/>
            <person name="Andre B."/>
            <person name="Arnold W."/>
            <person name="Bahr A."/>
            <person name="Ballesta J.P.G."/>
            <person name="Bargues M."/>
            <person name="Baron L."/>
            <person name="Becker A."/>
            <person name="Biteau N."/>
            <person name="Bloecker H."/>
            <person name="Blugeon C."/>
            <person name="Boskovic J."/>
            <person name="Brandt P."/>
            <person name="Brueckner M."/>
            <person name="Buitrago M.J."/>
            <person name="Coster F."/>
            <person name="Delaveau T."/>
            <person name="del Rey F."/>
            <person name="Dujon B."/>
            <person name="Eide L.G."/>
            <person name="Garcia-Cantalejo J.M."/>
            <person name="Goffeau A."/>
            <person name="Gomez-Peris A."/>
            <person name="Granotier C."/>
            <person name="Hanemann V."/>
            <person name="Hankeln T."/>
            <person name="Hoheisel J.D."/>
            <person name="Jaeger W."/>
            <person name="Jimenez A."/>
            <person name="Jonniaux J.-L."/>
            <person name="Kraemer C."/>
            <person name="Kuester H."/>
            <person name="Laamanen P."/>
            <person name="Legros Y."/>
            <person name="Louis E.J."/>
            <person name="Moeller-Rieker S."/>
            <person name="Monnet A."/>
            <person name="Moro M."/>
            <person name="Mueller-Auer S."/>
            <person name="Nussbaumer B."/>
            <person name="Paricio N."/>
            <person name="Paulin L."/>
            <person name="Perea J."/>
            <person name="Perez-Alonso M."/>
            <person name="Perez-Ortin J.E."/>
            <person name="Pohl T.M."/>
            <person name="Prydz H."/>
            <person name="Purnelle B."/>
            <person name="Rasmussen S.W."/>
            <person name="Remacha M.A."/>
            <person name="Revuelta J.L."/>
            <person name="Rieger M."/>
            <person name="Salom D."/>
            <person name="Saluz H.P."/>
            <person name="Saiz J.E."/>
            <person name="Saren A.-M."/>
            <person name="Schaefer M."/>
            <person name="Scharfe M."/>
            <person name="Schmidt E.R."/>
            <person name="Schneider C."/>
            <person name="Scholler P."/>
            <person name="Schwarz S."/>
            <person name="Soler-Mira A."/>
            <person name="Urrestarazu L.A."/>
            <person name="Verhasselt P."/>
            <person name="Vissers S."/>
            <person name="Voet M."/>
            <person name="Volckaert G."/>
            <person name="Wagner G."/>
            <person name="Wambutt R."/>
            <person name="Wedler E."/>
            <person name="Wedler H."/>
            <person name="Woelfl S."/>
            <person name="Harris D.E."/>
            <person name="Bowman S."/>
            <person name="Brown D."/>
            <person name="Churcher C.M."/>
            <person name="Connor R."/>
            <person name="Dedman K."/>
            <person name="Gentles S."/>
            <person name="Hamlin N."/>
            <person name="Hunt S."/>
            <person name="Jones L."/>
            <person name="McDonald S."/>
            <person name="Murphy L.D."/>
            <person name="Niblett D."/>
            <person name="Odell C."/>
            <person name="Oliver K."/>
            <person name="Rajandream M.A."/>
            <person name="Richards C."/>
            <person name="Shore L."/>
            <person name="Walsh S.V."/>
            <person name="Barrell B.G."/>
            <person name="Dietrich F.S."/>
            <person name="Mulligan J.T."/>
            <person name="Allen E."/>
            <person name="Araujo R."/>
            <person name="Aviles E."/>
            <person name="Berno A."/>
            <person name="Carpenter J."/>
            <person name="Chen E."/>
            <person name="Cherry J.M."/>
            <person name="Chung E."/>
            <person name="Duncan M."/>
            <person name="Hunicke-Smith S."/>
            <person name="Hyman R.W."/>
            <person name="Komp C."/>
            <person name="Lashkari D."/>
            <person name="Lew H."/>
            <person name="Lin D."/>
            <person name="Mosedale D."/>
            <person name="Nakahara K."/>
            <person name="Namath A."/>
            <person name="Oefner P."/>
            <person name="Oh C."/>
            <person name="Petel F.X."/>
            <person name="Roberts D."/>
            <person name="Schramm S."/>
            <person name="Schroeder M."/>
            <person name="Shogren T."/>
            <person name="Shroff N."/>
            <person name="Winant A."/>
            <person name="Yelton M.A."/>
            <person name="Botstein D."/>
            <person name="Davis R.W."/>
            <person name="Johnston M."/>
            <person name="Andrews S."/>
            <person name="Brinkman R."/>
            <person name="Cooper J."/>
            <person name="Ding H."/>
            <person name="Du Z."/>
            <person name="Favello A."/>
            <person name="Fulton L."/>
            <person name="Gattung S."/>
            <person name="Greco T."/>
            <person name="Hallsworth K."/>
            <person name="Hawkins J."/>
            <person name="Hillier L.W."/>
            <person name="Jier M."/>
            <person name="Johnson D."/>
            <person name="Johnston L."/>
            <person name="Kirsten J."/>
            <person name="Kucaba T."/>
            <person name="Langston Y."/>
            <person name="Latreille P."/>
            <person name="Le T."/>
            <person name="Mardis E."/>
            <person name="Menezes S."/>
            <person name="Miller N."/>
            <person name="Nhan M."/>
            <person name="Pauley A."/>
            <person name="Peluso D."/>
            <person name="Rifkin L."/>
            <person name="Riles L."/>
            <person name="Taich A."/>
            <person name="Trevaskis E."/>
            <person name="Vignati D."/>
            <person name="Wilcox L."/>
            <person name="Wohldman P."/>
            <person name="Vaudin M."/>
            <person name="Wilson R."/>
            <person name="Waterston R."/>
            <person name="Albermann K."/>
            <person name="Hani J."/>
            <person name="Heumann K."/>
            <person name="Kleine K."/>
            <person name="Mewes H.-W."/>
            <person name="Zollner A."/>
            <person name="Zaccaria P."/>
        </authorList>
    </citation>
    <scope>NUCLEOTIDE SEQUENCE [LARGE SCALE GENOMIC DNA]</scope>
    <source>
        <strain>ATCC 204508 / S288c</strain>
    </source>
</reference>
<reference key="2">
    <citation type="journal article" date="2014" name="G3 (Bethesda)">
        <title>The reference genome sequence of Saccharomyces cerevisiae: Then and now.</title>
        <authorList>
            <person name="Engel S.R."/>
            <person name="Dietrich F.S."/>
            <person name="Fisk D.G."/>
            <person name="Binkley G."/>
            <person name="Balakrishnan R."/>
            <person name="Costanzo M.C."/>
            <person name="Dwight S.S."/>
            <person name="Hitz B.C."/>
            <person name="Karra K."/>
            <person name="Nash R.S."/>
            <person name="Weng S."/>
            <person name="Wong E.D."/>
            <person name="Lloyd P."/>
            <person name="Skrzypek M.S."/>
            <person name="Miyasato S.R."/>
            <person name="Simison M."/>
            <person name="Cherry J.M."/>
        </authorList>
    </citation>
    <scope>GENOME REANNOTATION</scope>
    <source>
        <strain>ATCC 204508 / S288c</strain>
    </source>
</reference>
<reference key="3">
    <citation type="journal article" date="2007" name="Genome Res.">
        <title>Approaching a complete repository of sequence-verified protein-encoding clones for Saccharomyces cerevisiae.</title>
        <authorList>
            <person name="Hu Y."/>
            <person name="Rolfs A."/>
            <person name="Bhullar B."/>
            <person name="Murthy T.V.S."/>
            <person name="Zhu C."/>
            <person name="Berger M.F."/>
            <person name="Camargo A.A."/>
            <person name="Kelley F."/>
            <person name="McCarron S."/>
            <person name="Jepson D."/>
            <person name="Richardson A."/>
            <person name="Raphael J."/>
            <person name="Moreira D."/>
            <person name="Taycher E."/>
            <person name="Zuo D."/>
            <person name="Mohr S."/>
            <person name="Kane M.F."/>
            <person name="Williamson J."/>
            <person name="Simpson A.J.G."/>
            <person name="Bulyk M.L."/>
            <person name="Harlow E."/>
            <person name="Marsischky G."/>
            <person name="Kolodner R.D."/>
            <person name="LaBaer J."/>
        </authorList>
    </citation>
    <scope>NUCLEOTIDE SEQUENCE [GENOMIC DNA]</scope>
    <source>
        <strain>ATCC 204508 / S288c</strain>
    </source>
</reference>
<reference key="4">
    <citation type="journal article" date="2001" name="J. Biol. Chem.">
        <title>Identification of 12 new yeast mitochondrial ribosomal proteins including 6 that have no prokaryotic homologues.</title>
        <authorList>
            <person name="Saveanu C."/>
            <person name="Fromont-Racine M."/>
            <person name="Harington A."/>
            <person name="Ricard F."/>
            <person name="Namane A."/>
            <person name="Jacquier A."/>
        </authorList>
    </citation>
    <scope>SUBCELLULAR LOCATION</scope>
    <scope>IDENTIFICATION IN THE MITOCHONDRIAL RIBOSOMAL SMALL COMPLEX</scope>
    <scope>IDENTIFICATION BY MASS SPECTROMETRY</scope>
</reference>
<reference key="5">
    <citation type="journal article" date="2002" name="Eur. J. Biochem.">
        <title>Tag-mediated isolation of yeast mitochondrial ribosome and mass spectrometric identification of its new components.</title>
        <authorList>
            <person name="Gan X."/>
            <person name="Kitakawa M."/>
            <person name="Yoshino K."/>
            <person name="Oshiro N."/>
            <person name="Yonezawa K."/>
            <person name="Isono K."/>
        </authorList>
    </citation>
    <scope>IDENTIFICATION IN THE MITOCHONDRIAL RIBOSOMAL SMALL COMPLEX</scope>
    <scope>IDENTIFICATION BY MASS SPECTROMETRY</scope>
</reference>
<reference key="6">
    <citation type="journal article" date="2003" name="Nature">
        <title>Global analysis of protein localization in budding yeast.</title>
        <authorList>
            <person name="Huh W.-K."/>
            <person name="Falvo J.V."/>
            <person name="Gerke L.C."/>
            <person name="Carroll A.S."/>
            <person name="Howson R.W."/>
            <person name="Weissman J.S."/>
            <person name="O'Shea E.K."/>
        </authorList>
    </citation>
    <scope>SUBCELLULAR LOCATION [LARGE SCALE ANALYSIS]</scope>
</reference>
<reference key="7">
    <citation type="journal article" date="2003" name="Nature">
        <title>Global analysis of protein expression in yeast.</title>
        <authorList>
            <person name="Ghaemmaghami S."/>
            <person name="Huh W.-K."/>
            <person name="Bower K."/>
            <person name="Howson R.W."/>
            <person name="Belle A."/>
            <person name="Dephoure N."/>
            <person name="O'Shea E.K."/>
            <person name="Weissman J.S."/>
        </authorList>
    </citation>
    <scope>LEVEL OF PROTEIN EXPRESSION [LARGE SCALE ANALYSIS]</scope>
</reference>
<reference key="8">
    <citation type="journal article" date="2003" name="Proc. Natl. Acad. Sci. U.S.A.">
        <title>The proteome of Saccharomyces cerevisiae mitochondria.</title>
        <authorList>
            <person name="Sickmann A."/>
            <person name="Reinders J."/>
            <person name="Wagner Y."/>
            <person name="Joppich C."/>
            <person name="Zahedi R.P."/>
            <person name="Meyer H.E."/>
            <person name="Schoenfisch B."/>
            <person name="Perschil I."/>
            <person name="Chacinska A."/>
            <person name="Guiard B."/>
            <person name="Rehling P."/>
            <person name="Pfanner N."/>
            <person name="Meisinger C."/>
        </authorList>
    </citation>
    <scope>SUBCELLULAR LOCATION [LARGE SCALE ANALYSIS]</scope>
    <source>
        <strain>ATCC 76625 / YPH499</strain>
    </source>
</reference>
<reference key="9">
    <citation type="journal article" date="2008" name="Mol. Cell. Proteomics">
        <title>A multidimensional chromatography technology for in-depth phosphoproteome analysis.</title>
        <authorList>
            <person name="Albuquerque C.P."/>
            <person name="Smolka M.B."/>
            <person name="Payne S.H."/>
            <person name="Bafna V."/>
            <person name="Eng J."/>
            <person name="Zhou H."/>
        </authorList>
    </citation>
    <scope>PHOSPHORYLATION [LARGE SCALE ANALYSIS] AT SER-193</scope>
    <scope>IDENTIFICATION BY MASS SPECTROMETRY [LARGE SCALE ANALYSIS]</scope>
</reference>
<reference key="10">
    <citation type="journal article" date="2015" name="Nat. Commun.">
        <title>Organization of the mitochondrial translation machinery studied in situ by cryoelectron tomography.</title>
        <authorList>
            <person name="Pfeffer S."/>
            <person name="Woellhaf M.W."/>
            <person name="Herrmann J.M."/>
            <person name="Forster F."/>
        </authorList>
    </citation>
    <scope>SUBCELLULAR LOCATION</scope>
</reference>
<reference key="11">
    <citation type="journal article" date="2017" name="Science">
        <title>The structure of the yeast mitochondrial ribosome.</title>
        <authorList>
            <person name="Desai N."/>
            <person name="Brown A."/>
            <person name="Amunts A."/>
            <person name="Ramakrishnan V."/>
        </authorList>
    </citation>
    <scope>STRUCTURE BY ELECTRON MICROSCOPY (3.25 ANGSTROMS)</scope>
    <scope>SUBUNIT</scope>
</reference>
<gene>
    <name type="primary">RSM10</name>
    <name type="ordered locus">YDR041W</name>
    <name type="ORF">YD6888.03</name>
</gene>
<accession>Q03201</accession>
<accession>D6VS29</accession>
<sequence length="203" mass="23424">MLRNTIALRSFIRTQSTRPYPVNVEAVYYAPLKLPIKYGDLVADIQLRSYDNENLDFYSDFILRTGYYLGIPLTGPKPLPTRRERWTVIKSPFVHAKSKENFERHTHKRLIRAWDTNPEVLQMLIAYITKHSMAGVGMKCNFFQRSEISLDLGSDANGLEKSLSNIDELYSLRNDDKAQTSAVGQKVLELLDSPDFKKHLEKK</sequence>
<feature type="transit peptide" description="Mitochondrion" evidence="1">
    <location>
        <begin position="1"/>
        <end position="14"/>
    </location>
</feature>
<feature type="chain" id="PRO_0000042756" description="Small ribosomal subunit protein uS10m">
    <location>
        <begin position="15"/>
        <end position="203"/>
    </location>
</feature>
<feature type="modified residue" description="Phosphoserine" evidence="13">
    <location>
        <position position="193"/>
    </location>
</feature>
<feature type="helix" evidence="14">
    <location>
        <begin position="22"/>
        <end position="27"/>
    </location>
</feature>
<feature type="strand" evidence="14">
    <location>
        <begin position="41"/>
        <end position="52"/>
    </location>
</feature>
<feature type="helix" evidence="14">
    <location>
        <begin position="53"/>
        <end position="69"/>
    </location>
</feature>
<feature type="strand" evidence="14">
    <location>
        <begin position="77"/>
        <end position="88"/>
    </location>
</feature>
<feature type="strand" evidence="14">
    <location>
        <begin position="100"/>
        <end position="115"/>
    </location>
</feature>
<feature type="helix" evidence="14">
    <location>
        <begin position="118"/>
        <end position="130"/>
    </location>
</feature>
<feature type="strand" evidence="14">
    <location>
        <begin position="136"/>
        <end position="146"/>
    </location>
</feature>
<feature type="helix" evidence="14">
    <location>
        <begin position="182"/>
        <end position="191"/>
    </location>
</feature>
<feature type="helix" evidence="14">
    <location>
        <begin position="194"/>
        <end position="197"/>
    </location>
</feature>
<protein>
    <recommendedName>
        <fullName evidence="9">Small ribosomal subunit protein uS10m</fullName>
    </recommendedName>
    <alternativeName>
        <fullName>37S ribosomal protein S10, mitochondrial</fullName>
    </alternativeName>
</protein>
<name>RT10_YEAST</name>